<dbReference type="EC" id="7.1.1.-" evidence="1"/>
<dbReference type="EMBL" id="CP001150">
    <property type="protein sequence ID" value="ACM01278.1"/>
    <property type="molecule type" value="Genomic_DNA"/>
</dbReference>
<dbReference type="RefSeq" id="WP_015920726.1">
    <property type="nucleotide sequence ID" value="NC_011963.1"/>
</dbReference>
<dbReference type="SMR" id="B9KJI1"/>
<dbReference type="GeneID" id="67446834"/>
<dbReference type="KEGG" id="rsk:RSKD131_1418"/>
<dbReference type="HOGENOM" id="CLU_015134_3_2_5"/>
<dbReference type="GO" id="GO:0030964">
    <property type="term" value="C:NADH dehydrogenase complex"/>
    <property type="evidence" value="ECO:0007669"/>
    <property type="project" value="InterPro"/>
</dbReference>
<dbReference type="GO" id="GO:0005886">
    <property type="term" value="C:plasma membrane"/>
    <property type="evidence" value="ECO:0007669"/>
    <property type="project" value="UniProtKB-SubCell"/>
</dbReference>
<dbReference type="GO" id="GO:0051287">
    <property type="term" value="F:NAD binding"/>
    <property type="evidence" value="ECO:0007669"/>
    <property type="project" value="InterPro"/>
</dbReference>
<dbReference type="GO" id="GO:0008137">
    <property type="term" value="F:NADH dehydrogenase (ubiquinone) activity"/>
    <property type="evidence" value="ECO:0007669"/>
    <property type="project" value="InterPro"/>
</dbReference>
<dbReference type="GO" id="GO:0050136">
    <property type="term" value="F:NADH:ubiquinone reductase (non-electrogenic) activity"/>
    <property type="evidence" value="ECO:0007669"/>
    <property type="project" value="UniProtKB-UniRule"/>
</dbReference>
<dbReference type="GO" id="GO:0048038">
    <property type="term" value="F:quinone binding"/>
    <property type="evidence" value="ECO:0007669"/>
    <property type="project" value="UniProtKB-KW"/>
</dbReference>
<dbReference type="Gene3D" id="1.10.645.10">
    <property type="entry name" value="Cytochrome-c3 Hydrogenase, chain B"/>
    <property type="match status" value="1"/>
</dbReference>
<dbReference type="Gene3D" id="3.30.460.80">
    <property type="entry name" value="NADH:ubiquinone oxidoreductase, 30kDa subunit"/>
    <property type="match status" value="1"/>
</dbReference>
<dbReference type="HAMAP" id="MF_01359">
    <property type="entry name" value="NDH1_NuoCD_1"/>
    <property type="match status" value="1"/>
</dbReference>
<dbReference type="HAMAP" id="MF_01358">
    <property type="entry name" value="NDH1_NuoD"/>
    <property type="match status" value="1"/>
</dbReference>
<dbReference type="InterPro" id="IPR023062">
    <property type="entry name" value="NADH_DH_suCD"/>
</dbReference>
<dbReference type="InterPro" id="IPR001135">
    <property type="entry name" value="NADH_Q_OxRdtase_suD"/>
</dbReference>
<dbReference type="InterPro" id="IPR037232">
    <property type="entry name" value="NADH_quin_OxRdtase_su_C/D-like"/>
</dbReference>
<dbReference type="InterPro" id="IPR001268">
    <property type="entry name" value="NADH_UbQ_OxRdtase_30kDa_su"/>
</dbReference>
<dbReference type="InterPro" id="IPR014029">
    <property type="entry name" value="NADH_UbQ_OxRdtase_49kDa_CS"/>
</dbReference>
<dbReference type="InterPro" id="IPR022885">
    <property type="entry name" value="NDH1_su_D/H"/>
</dbReference>
<dbReference type="InterPro" id="IPR029014">
    <property type="entry name" value="NiFe-Hase_large"/>
</dbReference>
<dbReference type="NCBIfam" id="TIGR01962">
    <property type="entry name" value="NuoD"/>
    <property type="match status" value="1"/>
</dbReference>
<dbReference type="NCBIfam" id="NF004739">
    <property type="entry name" value="PRK06075.1"/>
    <property type="match status" value="1"/>
</dbReference>
<dbReference type="NCBIfam" id="NF008728">
    <property type="entry name" value="PRK11742.1"/>
    <property type="match status" value="1"/>
</dbReference>
<dbReference type="PANTHER" id="PTHR11993:SF45">
    <property type="entry name" value="NADH-QUINONE OXIDOREDUCTASE SUBUNIT C_D"/>
    <property type="match status" value="1"/>
</dbReference>
<dbReference type="PANTHER" id="PTHR11993">
    <property type="entry name" value="NADH-UBIQUINONE OXIDOREDUCTASE 49 KDA SUBUNIT"/>
    <property type="match status" value="1"/>
</dbReference>
<dbReference type="Pfam" id="PF00329">
    <property type="entry name" value="Complex1_30kDa"/>
    <property type="match status" value="1"/>
</dbReference>
<dbReference type="Pfam" id="PF00346">
    <property type="entry name" value="Complex1_49kDa"/>
    <property type="match status" value="1"/>
</dbReference>
<dbReference type="SUPFAM" id="SSF56762">
    <property type="entry name" value="HydB/Nqo4-like"/>
    <property type="match status" value="1"/>
</dbReference>
<dbReference type="SUPFAM" id="SSF143243">
    <property type="entry name" value="Nqo5-like"/>
    <property type="match status" value="1"/>
</dbReference>
<dbReference type="PROSITE" id="PS00535">
    <property type="entry name" value="COMPLEX1_49K"/>
    <property type="match status" value="1"/>
</dbReference>
<protein>
    <recommendedName>
        <fullName evidence="1">NADH-quinone oxidoreductase subunit C/D</fullName>
        <ecNumber evidence="1">7.1.1.-</ecNumber>
    </recommendedName>
    <alternativeName>
        <fullName evidence="1">NADH dehydrogenase I subunit C/D</fullName>
    </alternativeName>
    <alternativeName>
        <fullName evidence="1">NDH-1 subunit C/D</fullName>
    </alternativeName>
</protein>
<keyword id="KW-0997">Cell inner membrane</keyword>
<keyword id="KW-1003">Cell membrane</keyword>
<keyword id="KW-0472">Membrane</keyword>
<keyword id="KW-0511">Multifunctional enzyme</keyword>
<keyword id="KW-0520">NAD</keyword>
<keyword id="KW-0874">Quinone</keyword>
<keyword id="KW-1278">Translocase</keyword>
<keyword id="KW-0813">Transport</keyword>
<keyword id="KW-0830">Ubiquinone</keyword>
<accession>B9KJI1</accession>
<evidence type="ECO:0000255" key="1">
    <source>
        <dbReference type="HAMAP-Rule" id="MF_01359"/>
    </source>
</evidence>
<feature type="chain" id="PRO_1000166682" description="NADH-quinone oxidoreductase subunit C/D">
    <location>
        <begin position="1"/>
        <end position="580"/>
    </location>
</feature>
<feature type="region of interest" description="NADH dehydrogenase I subunit C" evidence="1">
    <location>
        <begin position="1"/>
        <end position="171"/>
    </location>
</feature>
<feature type="region of interest" description="NADH dehydrogenase I subunit D" evidence="1">
    <location>
        <begin position="195"/>
        <end position="580"/>
    </location>
</feature>
<reference key="1">
    <citation type="journal article" date="2009" name="J. Bacteriol.">
        <title>Complete genome sequence of Rhodobacter sphaeroides KD131.</title>
        <authorList>
            <person name="Lim S.-K."/>
            <person name="Kim S.J."/>
            <person name="Cha S.H."/>
            <person name="Oh Y.-K."/>
            <person name="Rhee H.-J."/>
            <person name="Kim M.-S."/>
            <person name="Lee J.K."/>
        </authorList>
    </citation>
    <scope>NUCLEOTIDE SEQUENCE [LARGE SCALE GENOMIC DNA]</scope>
    <source>
        <strain>KD131 / KCTC 12085</strain>
    </source>
</reference>
<comment type="function">
    <text evidence="1">NDH-1 shuttles electrons from NADH, via FMN and iron-sulfur (Fe-S) centers, to quinones in the respiratory chain. The immediate electron acceptor for the enzyme in this species is believed to be ubiquinone. Couples the redox reaction to proton translocation (for every two electrons transferred, four hydrogen ions are translocated across the cytoplasmic membrane), and thus conserves the redox energy in a proton gradient.</text>
</comment>
<comment type="catalytic activity">
    <reaction evidence="1">
        <text>a quinone + NADH + 5 H(+)(in) = a quinol + NAD(+) + 4 H(+)(out)</text>
        <dbReference type="Rhea" id="RHEA:57888"/>
        <dbReference type="ChEBI" id="CHEBI:15378"/>
        <dbReference type="ChEBI" id="CHEBI:24646"/>
        <dbReference type="ChEBI" id="CHEBI:57540"/>
        <dbReference type="ChEBI" id="CHEBI:57945"/>
        <dbReference type="ChEBI" id="CHEBI:132124"/>
    </reaction>
</comment>
<comment type="subunit">
    <text evidence="1">NDH-1 is composed of 13 different subunits. Subunits NuoB, CD, E, F, and G constitute the peripheral sector of the complex.</text>
</comment>
<comment type="subcellular location">
    <subcellularLocation>
        <location evidence="1">Cell inner membrane</location>
        <topology evidence="1">Peripheral membrane protein</topology>
        <orientation evidence="1">Cytoplasmic side</orientation>
    </subcellularLocation>
</comment>
<comment type="similarity">
    <text evidence="1">In the N-terminal section; belongs to the complex I 30 kDa subunit family.</text>
</comment>
<comment type="similarity">
    <text evidence="1">In the C-terminal section; belongs to the complex I 49 kDa subunit family.</text>
</comment>
<gene>
    <name evidence="1" type="primary">nuoC</name>
    <name evidence="1" type="synonym">nuoCD</name>
    <name evidence="1" type="synonym">nuoD</name>
    <name type="ordered locus">RSKD131_1418</name>
</gene>
<organism>
    <name type="scientific">Cereibacter sphaeroides (strain KD131 / KCTC 12085)</name>
    <name type="common">Rhodobacter sphaeroides</name>
    <dbReference type="NCBI Taxonomy" id="557760"/>
    <lineage>
        <taxon>Bacteria</taxon>
        <taxon>Pseudomonadati</taxon>
        <taxon>Pseudomonadota</taxon>
        <taxon>Alphaproteobacteria</taxon>
        <taxon>Rhodobacterales</taxon>
        <taxon>Paracoccaceae</taxon>
        <taxon>Cereibacter</taxon>
    </lineage>
</organism>
<name>NUOCD_CERSK</name>
<sequence length="580" mass="65393">MSLDQAIPEALQALRTRFGAAVRAEQATGEAFPVLWLDASVWEAAHRFLREEIAAPFPLLADLWAIDESLRQHRTGQPASRITLCSHLVSLVRNADLRLKLATDGRAPSIAGVYANADWYEREAHDMFGLDFGRETRRILMPPTWEGHPLLKTHYARATEKPPFVLTDRLFEAEERATITDPDLLGLPTLRDGEELMVLNFGPHHPSTHGVFRILLGLDGEEVVWAWPDIGYHHRGAEKMAERQTWHGFIPYCDRIDYLGGVISELPYLLAVERLCGIAVPPRAQMIRVMLCEFYRIMNHLLFYGTMAQDVGAMSPVFYMFTDREKGHEILNAITGARMHPAFFRIGGVAMDLPNGWDAMVRGFLDWMPARLDEYERMVLRSELFRARTVGVGAYDTDMALTWGTTGPGLRATGCDWDLRKLRPYSGYEQFEFEVPLGQRGDIFDRTRVRADEMRESLKIIRQCLENMPEGPVKADHPLTTPPPRGAMQKDIETLIAHFLQSSWGTVVPAGEATGQIEGHRGLTQYSVVSDGGTQSYRTRIRTPSFAHLQMIPKIVPGMTVADLVAHIASIDFVMSDVDR</sequence>
<proteinExistence type="inferred from homology"/>